<reference key="1">
    <citation type="journal article" date="2006" name="PLoS Genet.">
        <title>Genome sequence of Rickettsia bellii illuminates the role of amoebae in gene exchanges between intracellular pathogens.</title>
        <authorList>
            <person name="Ogata H."/>
            <person name="La Scola B."/>
            <person name="Audic S."/>
            <person name="Renesto P."/>
            <person name="Blanc G."/>
            <person name="Robert C."/>
            <person name="Fournier P.-E."/>
            <person name="Claverie J.-M."/>
            <person name="Raoult D."/>
        </authorList>
    </citation>
    <scope>NUCLEOTIDE SEQUENCE [LARGE SCALE GENOMIC DNA]</scope>
    <source>
        <strain>RML369-C</strain>
    </source>
</reference>
<dbReference type="EC" id="4.2.1.2" evidence="1"/>
<dbReference type="EMBL" id="CP000087">
    <property type="protein sequence ID" value="ABE05148.1"/>
    <property type="molecule type" value="Genomic_DNA"/>
</dbReference>
<dbReference type="RefSeq" id="WP_011477726.1">
    <property type="nucleotide sequence ID" value="NC_007940.1"/>
</dbReference>
<dbReference type="SMR" id="Q1RHL6"/>
<dbReference type="KEGG" id="rbe:RBE_1067"/>
<dbReference type="eggNOG" id="COG0114">
    <property type="taxonomic scope" value="Bacteria"/>
</dbReference>
<dbReference type="HOGENOM" id="CLU_021594_4_1_5"/>
<dbReference type="OrthoDB" id="9802809at2"/>
<dbReference type="UniPathway" id="UPA00223">
    <property type="reaction ID" value="UER01007"/>
</dbReference>
<dbReference type="Proteomes" id="UP000001951">
    <property type="component" value="Chromosome"/>
</dbReference>
<dbReference type="GO" id="GO:0005737">
    <property type="term" value="C:cytoplasm"/>
    <property type="evidence" value="ECO:0007669"/>
    <property type="project" value="UniProtKB-SubCell"/>
</dbReference>
<dbReference type="GO" id="GO:0004333">
    <property type="term" value="F:fumarate hydratase activity"/>
    <property type="evidence" value="ECO:0007669"/>
    <property type="project" value="UniProtKB-UniRule"/>
</dbReference>
<dbReference type="GO" id="GO:0006106">
    <property type="term" value="P:fumarate metabolic process"/>
    <property type="evidence" value="ECO:0007669"/>
    <property type="project" value="InterPro"/>
</dbReference>
<dbReference type="GO" id="GO:0006108">
    <property type="term" value="P:malate metabolic process"/>
    <property type="evidence" value="ECO:0007669"/>
    <property type="project" value="TreeGrafter"/>
</dbReference>
<dbReference type="GO" id="GO:0006099">
    <property type="term" value="P:tricarboxylic acid cycle"/>
    <property type="evidence" value="ECO:0007669"/>
    <property type="project" value="UniProtKB-UniRule"/>
</dbReference>
<dbReference type="CDD" id="cd01362">
    <property type="entry name" value="Fumarase_classII"/>
    <property type="match status" value="1"/>
</dbReference>
<dbReference type="FunFam" id="1.10.40.30:FF:000002">
    <property type="entry name" value="Fumarate hydratase class II"/>
    <property type="match status" value="1"/>
</dbReference>
<dbReference type="FunFam" id="1.10.275.10:FF:000001">
    <property type="entry name" value="Fumarate hydratase, mitochondrial"/>
    <property type="match status" value="1"/>
</dbReference>
<dbReference type="FunFam" id="1.20.200.10:FF:000001">
    <property type="entry name" value="Fumarate hydratase, mitochondrial"/>
    <property type="match status" value="1"/>
</dbReference>
<dbReference type="Gene3D" id="1.10.40.30">
    <property type="entry name" value="Fumarase/aspartase (C-terminal domain)"/>
    <property type="match status" value="1"/>
</dbReference>
<dbReference type="Gene3D" id="1.20.200.10">
    <property type="entry name" value="Fumarase/aspartase (Central domain)"/>
    <property type="match status" value="1"/>
</dbReference>
<dbReference type="Gene3D" id="1.10.275.10">
    <property type="entry name" value="Fumarase/aspartase (N-terminal domain)"/>
    <property type="match status" value="1"/>
</dbReference>
<dbReference type="HAMAP" id="MF_00743">
    <property type="entry name" value="FumaraseC"/>
    <property type="match status" value="1"/>
</dbReference>
<dbReference type="InterPro" id="IPR005677">
    <property type="entry name" value="Fum_hydII"/>
</dbReference>
<dbReference type="InterPro" id="IPR024083">
    <property type="entry name" value="Fumarase/histidase_N"/>
</dbReference>
<dbReference type="InterPro" id="IPR018951">
    <property type="entry name" value="Fumarase_C_C"/>
</dbReference>
<dbReference type="InterPro" id="IPR020557">
    <property type="entry name" value="Fumarate_lyase_CS"/>
</dbReference>
<dbReference type="InterPro" id="IPR000362">
    <property type="entry name" value="Fumarate_lyase_fam"/>
</dbReference>
<dbReference type="InterPro" id="IPR022761">
    <property type="entry name" value="Fumarate_lyase_N"/>
</dbReference>
<dbReference type="InterPro" id="IPR008948">
    <property type="entry name" value="L-Aspartase-like"/>
</dbReference>
<dbReference type="NCBIfam" id="TIGR00979">
    <property type="entry name" value="fumC_II"/>
    <property type="match status" value="1"/>
</dbReference>
<dbReference type="NCBIfam" id="NF008909">
    <property type="entry name" value="PRK12273.1"/>
    <property type="match status" value="1"/>
</dbReference>
<dbReference type="PANTHER" id="PTHR11444">
    <property type="entry name" value="ASPARTATEAMMONIA/ARGININOSUCCINATE/ADENYLOSUCCINATE LYASE"/>
    <property type="match status" value="1"/>
</dbReference>
<dbReference type="PANTHER" id="PTHR11444:SF1">
    <property type="entry name" value="FUMARATE HYDRATASE, MITOCHONDRIAL"/>
    <property type="match status" value="1"/>
</dbReference>
<dbReference type="Pfam" id="PF10415">
    <property type="entry name" value="FumaraseC_C"/>
    <property type="match status" value="1"/>
</dbReference>
<dbReference type="Pfam" id="PF00206">
    <property type="entry name" value="Lyase_1"/>
    <property type="match status" value="1"/>
</dbReference>
<dbReference type="PRINTS" id="PR00145">
    <property type="entry name" value="ARGSUCLYASE"/>
</dbReference>
<dbReference type="PRINTS" id="PR00149">
    <property type="entry name" value="FUMRATELYASE"/>
</dbReference>
<dbReference type="SUPFAM" id="SSF48557">
    <property type="entry name" value="L-aspartase-like"/>
    <property type="match status" value="1"/>
</dbReference>
<dbReference type="PROSITE" id="PS00163">
    <property type="entry name" value="FUMARATE_LYASES"/>
    <property type="match status" value="1"/>
</dbReference>
<proteinExistence type="inferred from homology"/>
<keyword id="KW-0963">Cytoplasm</keyword>
<keyword id="KW-0456">Lyase</keyword>
<keyword id="KW-0816">Tricarboxylic acid cycle</keyword>
<gene>
    <name evidence="1" type="primary">fumC</name>
    <name type="ordered locus">RBE_1067</name>
</gene>
<name>FUMC_RICBR</name>
<sequence>MTNYRTESDSFGEIQIEDKFYWGAQTQRSLENFKIGKQRMPEILIRSLAILKKCAAKVNLEFGDLEPKIAESIDKATSRILNAEFSDNFPLVVWQTGSGTQTNMNMNEVIASIANEELTGMKGGKSPVHPNDHVNKGQSSNDSFPTAMHIATVLATREKLIPALNNLLTALQNKSKDWDSIIKIGRTHLQDATPLTLKQEFSGYITQIEYALERIEDALKKVYLLAQGGTAVGTGINSRKGFDIKFAEEVAEFTKQPFKTAPNKFESLAAHDALVEFSGTLNTIAVSLMKIANDIRLLGSGPRCGLGELHLPENEPGSSIMPGKVNPTQVEALTMVCTQVMGNHVTVTIAGSNGHLELNVFKPVIIYNILQSIELLSDAANSFVTHCVDGIEPNITHINDLRDKSLMLVTALNPHIGYDNAAKIAKEAHKHGITLKEAAKKLNLLSEEEFNKIVVPEKMVRQS</sequence>
<comment type="function">
    <text evidence="1">Involved in the TCA cycle. Catalyzes the stereospecific interconversion of fumarate to L-malate.</text>
</comment>
<comment type="catalytic activity">
    <reaction evidence="1">
        <text>(S)-malate = fumarate + H2O</text>
        <dbReference type="Rhea" id="RHEA:12460"/>
        <dbReference type="ChEBI" id="CHEBI:15377"/>
        <dbReference type="ChEBI" id="CHEBI:15589"/>
        <dbReference type="ChEBI" id="CHEBI:29806"/>
        <dbReference type="EC" id="4.2.1.2"/>
    </reaction>
</comment>
<comment type="pathway">
    <text evidence="1">Carbohydrate metabolism; tricarboxylic acid cycle; (S)-malate from fumarate: step 1/1.</text>
</comment>
<comment type="subunit">
    <text evidence="1">Homotetramer.</text>
</comment>
<comment type="subcellular location">
    <subcellularLocation>
        <location evidence="1">Cytoplasm</location>
    </subcellularLocation>
</comment>
<comment type="miscellaneous">
    <text evidence="1">There are 2 substrate-binding sites: the catalytic A site, and the non-catalytic B site that may play a role in the transfer of substrate or product between the active site and the solvent. Alternatively, the B site may bind allosteric effectors.</text>
</comment>
<comment type="similarity">
    <text evidence="1">Belongs to the class-II fumarase/aspartase family. Fumarase subfamily.</text>
</comment>
<evidence type="ECO:0000255" key="1">
    <source>
        <dbReference type="HAMAP-Rule" id="MF_00743"/>
    </source>
</evidence>
<accession>Q1RHL6</accession>
<organism>
    <name type="scientific">Rickettsia bellii (strain RML369-C)</name>
    <dbReference type="NCBI Taxonomy" id="336407"/>
    <lineage>
        <taxon>Bacteria</taxon>
        <taxon>Pseudomonadati</taxon>
        <taxon>Pseudomonadota</taxon>
        <taxon>Alphaproteobacteria</taxon>
        <taxon>Rickettsiales</taxon>
        <taxon>Rickettsiaceae</taxon>
        <taxon>Rickettsieae</taxon>
        <taxon>Rickettsia</taxon>
        <taxon>belli group</taxon>
    </lineage>
</organism>
<feature type="chain" id="PRO_0000277938" description="Fumarate hydratase class II">
    <location>
        <begin position="1"/>
        <end position="463"/>
    </location>
</feature>
<feature type="active site" description="Proton donor/acceptor" evidence="1">
    <location>
        <position position="188"/>
    </location>
</feature>
<feature type="active site" evidence="1">
    <location>
        <position position="318"/>
    </location>
</feature>
<feature type="binding site" evidence="1">
    <location>
        <begin position="98"/>
        <end position="100"/>
    </location>
    <ligand>
        <name>substrate</name>
    </ligand>
</feature>
<feature type="binding site" description="in site B" evidence="1">
    <location>
        <begin position="129"/>
        <end position="132"/>
    </location>
    <ligand>
        <name>substrate</name>
    </ligand>
</feature>
<feature type="binding site" evidence="1">
    <location>
        <begin position="139"/>
        <end position="141"/>
    </location>
    <ligand>
        <name>substrate</name>
    </ligand>
</feature>
<feature type="binding site" evidence="1">
    <location>
        <position position="187"/>
    </location>
    <ligand>
        <name>substrate</name>
    </ligand>
</feature>
<feature type="binding site" evidence="1">
    <location>
        <position position="319"/>
    </location>
    <ligand>
        <name>substrate</name>
    </ligand>
</feature>
<feature type="binding site" evidence="1">
    <location>
        <begin position="324"/>
        <end position="326"/>
    </location>
    <ligand>
        <name>substrate</name>
    </ligand>
</feature>
<feature type="site" description="Important for catalytic activity" evidence="1">
    <location>
        <position position="331"/>
    </location>
</feature>
<protein>
    <recommendedName>
        <fullName evidence="1">Fumarate hydratase class II</fullName>
        <shortName evidence="1">Fumarase C</shortName>
        <ecNumber evidence="1">4.2.1.2</ecNumber>
    </recommendedName>
    <alternativeName>
        <fullName evidence="1">Aerobic fumarase</fullName>
    </alternativeName>
    <alternativeName>
        <fullName evidence="1">Iron-independent fumarase</fullName>
    </alternativeName>
</protein>